<protein>
    <recommendedName>
        <fullName>Iron-sulfur cluster assembly factor IBA57 homolog, mitochondrial</fullName>
    </recommendedName>
</protein>
<reference key="1">
    <citation type="journal article" date="2005" name="Nature">
        <title>Genomic sequence of the pathogenic and allergenic filamentous fungus Aspergillus fumigatus.</title>
        <authorList>
            <person name="Nierman W.C."/>
            <person name="Pain A."/>
            <person name="Anderson M.J."/>
            <person name="Wortman J.R."/>
            <person name="Kim H.S."/>
            <person name="Arroyo J."/>
            <person name="Berriman M."/>
            <person name="Abe K."/>
            <person name="Archer D.B."/>
            <person name="Bermejo C."/>
            <person name="Bennett J.W."/>
            <person name="Bowyer P."/>
            <person name="Chen D."/>
            <person name="Collins M."/>
            <person name="Coulsen R."/>
            <person name="Davies R."/>
            <person name="Dyer P.S."/>
            <person name="Farman M.L."/>
            <person name="Fedorova N."/>
            <person name="Fedorova N.D."/>
            <person name="Feldblyum T.V."/>
            <person name="Fischer R."/>
            <person name="Fosker N."/>
            <person name="Fraser A."/>
            <person name="Garcia J.L."/>
            <person name="Garcia M.J."/>
            <person name="Goble A."/>
            <person name="Goldman G.H."/>
            <person name="Gomi K."/>
            <person name="Griffith-Jones S."/>
            <person name="Gwilliam R."/>
            <person name="Haas B.J."/>
            <person name="Haas H."/>
            <person name="Harris D.E."/>
            <person name="Horiuchi H."/>
            <person name="Huang J."/>
            <person name="Humphray S."/>
            <person name="Jimenez J."/>
            <person name="Keller N."/>
            <person name="Khouri H."/>
            <person name="Kitamoto K."/>
            <person name="Kobayashi T."/>
            <person name="Konzack S."/>
            <person name="Kulkarni R."/>
            <person name="Kumagai T."/>
            <person name="Lafton A."/>
            <person name="Latge J.-P."/>
            <person name="Li W."/>
            <person name="Lord A."/>
            <person name="Lu C."/>
            <person name="Majoros W.H."/>
            <person name="May G.S."/>
            <person name="Miller B.L."/>
            <person name="Mohamoud Y."/>
            <person name="Molina M."/>
            <person name="Monod M."/>
            <person name="Mouyna I."/>
            <person name="Mulligan S."/>
            <person name="Murphy L.D."/>
            <person name="O'Neil S."/>
            <person name="Paulsen I."/>
            <person name="Penalva M.A."/>
            <person name="Pertea M."/>
            <person name="Price C."/>
            <person name="Pritchard B.L."/>
            <person name="Quail M.A."/>
            <person name="Rabbinowitsch E."/>
            <person name="Rawlins N."/>
            <person name="Rajandream M.A."/>
            <person name="Reichard U."/>
            <person name="Renauld H."/>
            <person name="Robson G.D."/>
            <person name="Rodriguez de Cordoba S."/>
            <person name="Rodriguez-Pena J.M."/>
            <person name="Ronning C.M."/>
            <person name="Rutter S."/>
            <person name="Salzberg S.L."/>
            <person name="Sanchez M."/>
            <person name="Sanchez-Ferrero J.C."/>
            <person name="Saunders D."/>
            <person name="Seeger K."/>
            <person name="Squares R."/>
            <person name="Squares S."/>
            <person name="Takeuchi M."/>
            <person name="Tekaia F."/>
            <person name="Turner G."/>
            <person name="Vazquez de Aldana C.R."/>
            <person name="Weidman J."/>
            <person name="White O."/>
            <person name="Woodward J.R."/>
            <person name="Yu J.-H."/>
            <person name="Fraser C.M."/>
            <person name="Galagan J.E."/>
            <person name="Asai K."/>
            <person name="Machida M."/>
            <person name="Hall N."/>
            <person name="Barrell B.G."/>
            <person name="Denning D.W."/>
        </authorList>
    </citation>
    <scope>NUCLEOTIDE SEQUENCE [LARGE SCALE GENOMIC DNA]</scope>
    <source>
        <strain>ATCC MYA-4609 / CBS 101355 / FGSC A1100 / Af293</strain>
    </source>
</reference>
<proteinExistence type="inferred from homology"/>
<evidence type="ECO:0000250" key="1">
    <source>
        <dbReference type="UniProtKB" id="P47158"/>
    </source>
</evidence>
<evidence type="ECO:0000255" key="2"/>
<evidence type="ECO:0000256" key="3">
    <source>
        <dbReference type="SAM" id="MobiDB-lite"/>
    </source>
</evidence>
<evidence type="ECO:0000305" key="4"/>
<gene>
    <name type="primary">caf17</name>
    <name type="ORF">AFUA_5G12430</name>
</gene>
<name>CAF17_ASPFU</name>
<sequence length="447" mass="49111">MRSITSSKRVCAHCLSRSRLFSTTVQHRAQPSSNAVPSSPPRSGYARLTNRGLISITGVDSTTFLQGLITQNMLIANDPRRATRRTGTYTAFLNSQGRVLNDAFIYPMPKGDSETDTTGDPAWLVEVDKNEVSSLLKHLKKHKLRSKLKLRALEDGERTVWSSWKDHAEPRWAAYNLESESSSPFAPSSSVAGCIDTRAPGFGSRLVTPGEEDLRVHLPDEAQVAGSQVDLGTYTVRRMLHGIAEGQAEIIRESALPLECNMDMMRGVDFRKGCYVGQELTIRTHHTGVVRKRIVPVQLYANSAPQSGDTPVYDPSAAVALPPSGSNISKVDGRKGRSAGKFLGGVGNIGLALCRLEIMTDIVLTGEGSHYSPEQEFKISWSAPEEGSSSATEPGEVKVKALVPPWLRDYISSGARNLARKVDNQEGHRAKELLYQLEEEEEQRRNE</sequence>
<dbReference type="EMBL" id="AAHF01000003">
    <property type="protein sequence ID" value="EAL91371.1"/>
    <property type="molecule type" value="Genomic_DNA"/>
</dbReference>
<dbReference type="RefSeq" id="XP_753409.1">
    <property type="nucleotide sequence ID" value="XM_748316.1"/>
</dbReference>
<dbReference type="SMR" id="Q4WVK5"/>
<dbReference type="FunCoup" id="Q4WVK5">
    <property type="interactions" value="285"/>
</dbReference>
<dbReference type="STRING" id="330879.Q4WVK5"/>
<dbReference type="EnsemblFungi" id="EAL91371">
    <property type="protein sequence ID" value="EAL91371"/>
    <property type="gene ID" value="AFUA_5G12430"/>
</dbReference>
<dbReference type="GeneID" id="3511334"/>
<dbReference type="KEGG" id="afm:AFUA_5G12430"/>
<dbReference type="VEuPathDB" id="FungiDB:Afu5g12430"/>
<dbReference type="eggNOG" id="KOG2929">
    <property type="taxonomic scope" value="Eukaryota"/>
</dbReference>
<dbReference type="HOGENOM" id="CLU_007884_7_0_1"/>
<dbReference type="InParanoid" id="Q4WVK5"/>
<dbReference type="OMA" id="NMLVAND"/>
<dbReference type="OrthoDB" id="191995at2759"/>
<dbReference type="Proteomes" id="UP000002530">
    <property type="component" value="Chromosome 5"/>
</dbReference>
<dbReference type="GO" id="GO:0005759">
    <property type="term" value="C:mitochondrial matrix"/>
    <property type="evidence" value="ECO:0000318"/>
    <property type="project" value="GO_Central"/>
</dbReference>
<dbReference type="GO" id="GO:0016740">
    <property type="term" value="F:transferase activity"/>
    <property type="evidence" value="ECO:0007669"/>
    <property type="project" value="UniProtKB-KW"/>
</dbReference>
<dbReference type="GO" id="GO:0016226">
    <property type="term" value="P:iron-sulfur cluster assembly"/>
    <property type="evidence" value="ECO:0000318"/>
    <property type="project" value="GO_Central"/>
</dbReference>
<dbReference type="FunFam" id="3.30.1360.120:FF:000028">
    <property type="entry name" value="Putative transferase caf17, mitochondrial"/>
    <property type="match status" value="1"/>
</dbReference>
<dbReference type="Gene3D" id="3.30.1360.120">
    <property type="entry name" value="Probable tRNA modification gtpase trme, domain 1"/>
    <property type="match status" value="1"/>
</dbReference>
<dbReference type="InterPro" id="IPR027266">
    <property type="entry name" value="TrmE/GcvT_dom1"/>
</dbReference>
<dbReference type="InterPro" id="IPR045179">
    <property type="entry name" value="YgfZ/GcvT"/>
</dbReference>
<dbReference type="InterPro" id="IPR017703">
    <property type="entry name" value="YgfZ/GcvT_CS"/>
</dbReference>
<dbReference type="NCBIfam" id="TIGR03317">
    <property type="entry name" value="ygfZ_signature"/>
    <property type="match status" value="1"/>
</dbReference>
<dbReference type="PANTHER" id="PTHR22602">
    <property type="entry name" value="TRANSFERASE CAF17, MITOCHONDRIAL-RELATED"/>
    <property type="match status" value="1"/>
</dbReference>
<dbReference type="PANTHER" id="PTHR22602:SF0">
    <property type="entry name" value="TRANSFERASE CAF17, MITOCHONDRIAL-RELATED"/>
    <property type="match status" value="1"/>
</dbReference>
<dbReference type="Pfam" id="PF25455">
    <property type="entry name" value="Beta-barrel_CAF17_C"/>
    <property type="match status" value="1"/>
</dbReference>
<dbReference type="SUPFAM" id="SSF103025">
    <property type="entry name" value="Folate-binding domain"/>
    <property type="match status" value="1"/>
</dbReference>
<organism>
    <name type="scientific">Aspergillus fumigatus (strain ATCC MYA-4609 / CBS 101355 / FGSC A1100 / Af293)</name>
    <name type="common">Neosartorya fumigata</name>
    <dbReference type="NCBI Taxonomy" id="330879"/>
    <lineage>
        <taxon>Eukaryota</taxon>
        <taxon>Fungi</taxon>
        <taxon>Dikarya</taxon>
        <taxon>Ascomycota</taxon>
        <taxon>Pezizomycotina</taxon>
        <taxon>Eurotiomycetes</taxon>
        <taxon>Eurotiomycetidae</taxon>
        <taxon>Eurotiales</taxon>
        <taxon>Aspergillaceae</taxon>
        <taxon>Aspergillus</taxon>
        <taxon>Aspergillus subgen. Fumigati</taxon>
    </lineage>
</organism>
<feature type="transit peptide" description="Mitochondrion" evidence="2">
    <location>
        <begin position="1"/>
        <end position="28"/>
    </location>
</feature>
<feature type="chain" id="PRO_0000301691" description="Iron-sulfur cluster assembly factor IBA57 homolog, mitochondrial">
    <location>
        <begin position="29"/>
        <end position="447"/>
    </location>
</feature>
<feature type="region of interest" description="Disordered" evidence="3">
    <location>
        <begin position="25"/>
        <end position="44"/>
    </location>
</feature>
<feature type="compositionally biased region" description="Polar residues" evidence="3">
    <location>
        <begin position="25"/>
        <end position="37"/>
    </location>
</feature>
<comment type="subcellular location">
    <subcellularLocation>
        <location evidence="1">Mitochondrion matrix</location>
    </subcellularLocation>
</comment>
<comment type="similarity">
    <text evidence="4">Belongs to the GcvT family. CAF17/IBA57 subfamily.</text>
</comment>
<keyword id="KW-0496">Mitochondrion</keyword>
<keyword id="KW-1185">Reference proteome</keyword>
<keyword id="KW-0809">Transit peptide</keyword>
<accession>Q4WVK5</accession>